<dbReference type="EMBL" id="M60065">
    <property type="protein sequence ID" value="AAA28880.1"/>
    <property type="status" value="ALT_INIT"/>
    <property type="molecule type" value="Genomic_DNA"/>
</dbReference>
<dbReference type="EMBL" id="AE013599">
    <property type="protein sequence ID" value="AAF58455.2"/>
    <property type="molecule type" value="Genomic_DNA"/>
</dbReference>
<dbReference type="EMBL" id="AY129456">
    <property type="protein sequence ID" value="AAM76198.1"/>
    <property type="molecule type" value="mRNA"/>
</dbReference>
<dbReference type="PIR" id="A39832">
    <property type="entry name" value="A39832"/>
</dbReference>
<dbReference type="RefSeq" id="NP_476710.2">
    <property type="nucleotide sequence ID" value="NM_057362.3"/>
</dbReference>
<dbReference type="RefSeq" id="NP_725230.2">
    <property type="nucleotide sequence ID" value="NM_165951.2"/>
</dbReference>
<dbReference type="SMR" id="P21520"/>
<dbReference type="BioGRID" id="62183">
    <property type="interactions" value="14"/>
</dbReference>
<dbReference type="FunCoup" id="P21520">
    <property type="interactions" value="7"/>
</dbReference>
<dbReference type="IntAct" id="P21520">
    <property type="interactions" value="2"/>
</dbReference>
<dbReference type="MINT" id="P21520"/>
<dbReference type="STRING" id="7227.FBpp0086969"/>
<dbReference type="GlyCosmos" id="P21520">
    <property type="glycosylation" value="6 sites, No reported glycans"/>
</dbReference>
<dbReference type="GlyGen" id="P21520">
    <property type="glycosylation" value="6 sites"/>
</dbReference>
<dbReference type="PaxDb" id="7227-FBpp0086969"/>
<dbReference type="DNASU" id="36411"/>
<dbReference type="EnsemblMetazoa" id="FBtr0087855">
    <property type="protein sequence ID" value="FBpp0086968"/>
    <property type="gene ID" value="FBgn0003326"/>
</dbReference>
<dbReference type="EnsemblMetazoa" id="FBtr0087856">
    <property type="protein sequence ID" value="FBpp0086969"/>
    <property type="gene ID" value="FBgn0003326"/>
</dbReference>
<dbReference type="GeneID" id="36411"/>
<dbReference type="KEGG" id="dme:Dmel_CG17579"/>
<dbReference type="AGR" id="FB:FBgn0003326"/>
<dbReference type="CTD" id="36411"/>
<dbReference type="FlyBase" id="FBgn0003326">
    <property type="gene designation" value="sca"/>
</dbReference>
<dbReference type="VEuPathDB" id="VectorBase:FBgn0003326"/>
<dbReference type="eggNOG" id="KOG2579">
    <property type="taxonomic scope" value="Eukaryota"/>
</dbReference>
<dbReference type="HOGENOM" id="CLU_021665_0_0_1"/>
<dbReference type="InParanoid" id="P21520"/>
<dbReference type="OMA" id="WADYAHG"/>
<dbReference type="OrthoDB" id="9990035at2759"/>
<dbReference type="PhylomeDB" id="P21520"/>
<dbReference type="SignaLink" id="P21520"/>
<dbReference type="BioGRID-ORCS" id="36411">
    <property type="hits" value="0 hits in 3 CRISPR screens"/>
</dbReference>
<dbReference type="GenomeRNAi" id="36411"/>
<dbReference type="PRO" id="PR:P21520"/>
<dbReference type="Proteomes" id="UP000000803">
    <property type="component" value="Chromosome 2R"/>
</dbReference>
<dbReference type="Bgee" id="FBgn0003326">
    <property type="expression patterns" value="Expressed in gamma Kenyon cell (Drosophila) in insect head and 73 other cell types or tissues"/>
</dbReference>
<dbReference type="GO" id="GO:0062023">
    <property type="term" value="C:collagen-containing extracellular matrix"/>
    <property type="evidence" value="ECO:0000318"/>
    <property type="project" value="GO_Central"/>
</dbReference>
<dbReference type="GO" id="GO:0005615">
    <property type="term" value="C:extracellular space"/>
    <property type="evidence" value="ECO:0000318"/>
    <property type="project" value="GO_Central"/>
</dbReference>
<dbReference type="GO" id="GO:0005770">
    <property type="term" value="C:late endosome"/>
    <property type="evidence" value="ECO:0007669"/>
    <property type="project" value="UniProtKB-SubCell"/>
</dbReference>
<dbReference type="GO" id="GO:0030154">
    <property type="term" value="P:cell differentiation"/>
    <property type="evidence" value="ECO:0007669"/>
    <property type="project" value="UniProtKB-KW"/>
</dbReference>
<dbReference type="GO" id="GO:0008407">
    <property type="term" value="P:chaeta morphogenesis"/>
    <property type="evidence" value="ECO:0000315"/>
    <property type="project" value="FlyBase"/>
</dbReference>
<dbReference type="GO" id="GO:0048749">
    <property type="term" value="P:compound eye development"/>
    <property type="evidence" value="ECO:0000315"/>
    <property type="project" value="FlyBase"/>
</dbReference>
<dbReference type="GO" id="GO:0008587">
    <property type="term" value="P:imaginal disc-derived wing margin morphogenesis"/>
    <property type="evidence" value="ECO:0000315"/>
    <property type="project" value="FlyBase"/>
</dbReference>
<dbReference type="GO" id="GO:0007399">
    <property type="term" value="P:nervous system development"/>
    <property type="evidence" value="ECO:0000316"/>
    <property type="project" value="FlyBase"/>
</dbReference>
<dbReference type="GO" id="GO:0007219">
    <property type="term" value="P:Notch signaling pathway"/>
    <property type="evidence" value="ECO:0007669"/>
    <property type="project" value="UniProtKB-KW"/>
</dbReference>
<dbReference type="GO" id="GO:0016318">
    <property type="term" value="P:ommatidial rotation"/>
    <property type="evidence" value="ECO:0000315"/>
    <property type="project" value="FlyBase"/>
</dbReference>
<dbReference type="GO" id="GO:0097305">
    <property type="term" value="P:response to alcohol"/>
    <property type="evidence" value="ECO:0000315"/>
    <property type="project" value="FlyBase"/>
</dbReference>
<dbReference type="CDD" id="cd00087">
    <property type="entry name" value="FReD"/>
    <property type="match status" value="1"/>
</dbReference>
<dbReference type="FunFam" id="3.90.215.10:FF:000014">
    <property type="entry name" value="Blast:Protein scabrous"/>
    <property type="match status" value="1"/>
</dbReference>
<dbReference type="Gene3D" id="3.90.215.10">
    <property type="entry name" value="Gamma Fibrinogen, chain A, domain 1"/>
    <property type="match status" value="1"/>
</dbReference>
<dbReference type="InterPro" id="IPR036056">
    <property type="entry name" value="Fibrinogen-like_C"/>
</dbReference>
<dbReference type="InterPro" id="IPR014716">
    <property type="entry name" value="Fibrinogen_a/b/g_C_1"/>
</dbReference>
<dbReference type="InterPro" id="IPR002181">
    <property type="entry name" value="Fibrinogen_a/b/g_C_dom"/>
</dbReference>
<dbReference type="InterPro" id="IPR050373">
    <property type="entry name" value="Fibrinogen_C-term_domain"/>
</dbReference>
<dbReference type="InterPro" id="IPR020837">
    <property type="entry name" value="Fibrinogen_CS"/>
</dbReference>
<dbReference type="PANTHER" id="PTHR19143">
    <property type="entry name" value="FIBRINOGEN/TENASCIN/ANGIOPOEITIN"/>
    <property type="match status" value="1"/>
</dbReference>
<dbReference type="PANTHER" id="PTHR19143:SF444">
    <property type="entry name" value="PROTEIN SCABROUS"/>
    <property type="match status" value="1"/>
</dbReference>
<dbReference type="Pfam" id="PF00147">
    <property type="entry name" value="Fibrinogen_C"/>
    <property type="match status" value="1"/>
</dbReference>
<dbReference type="SMART" id="SM00186">
    <property type="entry name" value="FBG"/>
    <property type="match status" value="1"/>
</dbReference>
<dbReference type="SUPFAM" id="SSF56496">
    <property type="entry name" value="Fibrinogen C-terminal domain-like"/>
    <property type="match status" value="1"/>
</dbReference>
<dbReference type="PROSITE" id="PS00514">
    <property type="entry name" value="FIBRINOGEN_C_1"/>
    <property type="match status" value="1"/>
</dbReference>
<dbReference type="PROSITE" id="PS51406">
    <property type="entry name" value="FIBRINOGEN_C_2"/>
    <property type="match status" value="1"/>
</dbReference>
<keyword id="KW-0217">Developmental protein</keyword>
<keyword id="KW-0221">Differentiation</keyword>
<keyword id="KW-1015">Disulfide bond</keyword>
<keyword id="KW-0967">Endosome</keyword>
<keyword id="KW-0325">Glycoprotein</keyword>
<keyword id="KW-0524">Neurogenesis</keyword>
<keyword id="KW-0914">Notch signaling pathway</keyword>
<keyword id="KW-1185">Reference proteome</keyword>
<keyword id="KW-0732">Signal</keyword>
<protein>
    <recommendedName>
        <fullName>Protein scabrous</fullName>
    </recommendedName>
</protein>
<reference key="1">
    <citation type="journal article" date="1990" name="Science">
        <title>Spacing differentiation in the developing Drosophila eye: a fibrinogen-related lateral inhibitor encoded by scabrous.</title>
        <authorList>
            <person name="Baker N.E."/>
            <person name="Mlodzik M."/>
            <person name="Rubin G.M."/>
        </authorList>
    </citation>
    <scope>NUCLEOTIDE SEQUENCE [GENOMIC DNA]</scope>
    <scope>FUNCTION</scope>
    <scope>SUBCELLULAR LOCATION</scope>
</reference>
<reference key="2">
    <citation type="journal article" date="2000" name="Science">
        <title>The genome sequence of Drosophila melanogaster.</title>
        <authorList>
            <person name="Adams M.D."/>
            <person name="Celniker S.E."/>
            <person name="Holt R.A."/>
            <person name="Evans C.A."/>
            <person name="Gocayne J.D."/>
            <person name="Amanatides P.G."/>
            <person name="Scherer S.E."/>
            <person name="Li P.W."/>
            <person name="Hoskins R.A."/>
            <person name="Galle R.F."/>
            <person name="George R.A."/>
            <person name="Lewis S.E."/>
            <person name="Richards S."/>
            <person name="Ashburner M."/>
            <person name="Henderson S.N."/>
            <person name="Sutton G.G."/>
            <person name="Wortman J.R."/>
            <person name="Yandell M.D."/>
            <person name="Zhang Q."/>
            <person name="Chen L.X."/>
            <person name="Brandon R.C."/>
            <person name="Rogers Y.-H.C."/>
            <person name="Blazej R.G."/>
            <person name="Champe M."/>
            <person name="Pfeiffer B.D."/>
            <person name="Wan K.H."/>
            <person name="Doyle C."/>
            <person name="Baxter E.G."/>
            <person name="Helt G."/>
            <person name="Nelson C.R."/>
            <person name="Miklos G.L.G."/>
            <person name="Abril J.F."/>
            <person name="Agbayani A."/>
            <person name="An H.-J."/>
            <person name="Andrews-Pfannkoch C."/>
            <person name="Baldwin D."/>
            <person name="Ballew R.M."/>
            <person name="Basu A."/>
            <person name="Baxendale J."/>
            <person name="Bayraktaroglu L."/>
            <person name="Beasley E.M."/>
            <person name="Beeson K.Y."/>
            <person name="Benos P.V."/>
            <person name="Berman B.P."/>
            <person name="Bhandari D."/>
            <person name="Bolshakov S."/>
            <person name="Borkova D."/>
            <person name="Botchan M.R."/>
            <person name="Bouck J."/>
            <person name="Brokstein P."/>
            <person name="Brottier P."/>
            <person name="Burtis K.C."/>
            <person name="Busam D.A."/>
            <person name="Butler H."/>
            <person name="Cadieu E."/>
            <person name="Center A."/>
            <person name="Chandra I."/>
            <person name="Cherry J.M."/>
            <person name="Cawley S."/>
            <person name="Dahlke C."/>
            <person name="Davenport L.B."/>
            <person name="Davies P."/>
            <person name="de Pablos B."/>
            <person name="Delcher A."/>
            <person name="Deng Z."/>
            <person name="Mays A.D."/>
            <person name="Dew I."/>
            <person name="Dietz S.M."/>
            <person name="Dodson K."/>
            <person name="Doup L.E."/>
            <person name="Downes M."/>
            <person name="Dugan-Rocha S."/>
            <person name="Dunkov B.C."/>
            <person name="Dunn P."/>
            <person name="Durbin K.J."/>
            <person name="Evangelista C.C."/>
            <person name="Ferraz C."/>
            <person name="Ferriera S."/>
            <person name="Fleischmann W."/>
            <person name="Fosler C."/>
            <person name="Gabrielian A.E."/>
            <person name="Garg N.S."/>
            <person name="Gelbart W.M."/>
            <person name="Glasser K."/>
            <person name="Glodek A."/>
            <person name="Gong F."/>
            <person name="Gorrell J.H."/>
            <person name="Gu Z."/>
            <person name="Guan P."/>
            <person name="Harris M."/>
            <person name="Harris N.L."/>
            <person name="Harvey D.A."/>
            <person name="Heiman T.J."/>
            <person name="Hernandez J.R."/>
            <person name="Houck J."/>
            <person name="Hostin D."/>
            <person name="Houston K.A."/>
            <person name="Howland T.J."/>
            <person name="Wei M.-H."/>
            <person name="Ibegwam C."/>
            <person name="Jalali M."/>
            <person name="Kalush F."/>
            <person name="Karpen G.H."/>
            <person name="Ke Z."/>
            <person name="Kennison J.A."/>
            <person name="Ketchum K.A."/>
            <person name="Kimmel B.E."/>
            <person name="Kodira C.D."/>
            <person name="Kraft C.L."/>
            <person name="Kravitz S."/>
            <person name="Kulp D."/>
            <person name="Lai Z."/>
            <person name="Lasko P."/>
            <person name="Lei Y."/>
            <person name="Levitsky A.A."/>
            <person name="Li J.H."/>
            <person name="Li Z."/>
            <person name="Liang Y."/>
            <person name="Lin X."/>
            <person name="Liu X."/>
            <person name="Mattei B."/>
            <person name="McIntosh T.C."/>
            <person name="McLeod M.P."/>
            <person name="McPherson D."/>
            <person name="Merkulov G."/>
            <person name="Milshina N.V."/>
            <person name="Mobarry C."/>
            <person name="Morris J."/>
            <person name="Moshrefi A."/>
            <person name="Mount S.M."/>
            <person name="Moy M."/>
            <person name="Murphy B."/>
            <person name="Murphy L."/>
            <person name="Muzny D.M."/>
            <person name="Nelson D.L."/>
            <person name="Nelson D.R."/>
            <person name="Nelson K.A."/>
            <person name="Nixon K."/>
            <person name="Nusskern D.R."/>
            <person name="Pacleb J.M."/>
            <person name="Palazzolo M."/>
            <person name="Pittman G.S."/>
            <person name="Pan S."/>
            <person name="Pollard J."/>
            <person name="Puri V."/>
            <person name="Reese M.G."/>
            <person name="Reinert K."/>
            <person name="Remington K."/>
            <person name="Saunders R.D.C."/>
            <person name="Scheeler F."/>
            <person name="Shen H."/>
            <person name="Shue B.C."/>
            <person name="Siden-Kiamos I."/>
            <person name="Simpson M."/>
            <person name="Skupski M.P."/>
            <person name="Smith T.J."/>
            <person name="Spier E."/>
            <person name="Spradling A.C."/>
            <person name="Stapleton M."/>
            <person name="Strong R."/>
            <person name="Sun E."/>
            <person name="Svirskas R."/>
            <person name="Tector C."/>
            <person name="Turner R."/>
            <person name="Venter E."/>
            <person name="Wang A.H."/>
            <person name="Wang X."/>
            <person name="Wang Z.-Y."/>
            <person name="Wassarman D.A."/>
            <person name="Weinstock G.M."/>
            <person name="Weissenbach J."/>
            <person name="Williams S.M."/>
            <person name="Woodage T."/>
            <person name="Worley K.C."/>
            <person name="Wu D."/>
            <person name="Yang S."/>
            <person name="Yao Q.A."/>
            <person name="Ye J."/>
            <person name="Yeh R.-F."/>
            <person name="Zaveri J.S."/>
            <person name="Zhan M."/>
            <person name="Zhang G."/>
            <person name="Zhao Q."/>
            <person name="Zheng L."/>
            <person name="Zheng X.H."/>
            <person name="Zhong F.N."/>
            <person name="Zhong W."/>
            <person name="Zhou X."/>
            <person name="Zhu S.C."/>
            <person name="Zhu X."/>
            <person name="Smith H.O."/>
            <person name="Gibbs R.A."/>
            <person name="Myers E.W."/>
            <person name="Rubin G.M."/>
            <person name="Venter J.C."/>
        </authorList>
    </citation>
    <scope>NUCLEOTIDE SEQUENCE [LARGE SCALE GENOMIC DNA]</scope>
    <source>
        <strain>Berkeley</strain>
    </source>
</reference>
<reference key="3">
    <citation type="journal article" date="2002" name="Genome Biol.">
        <title>Annotation of the Drosophila melanogaster euchromatic genome: a systematic review.</title>
        <authorList>
            <person name="Misra S."/>
            <person name="Crosby M.A."/>
            <person name="Mungall C.J."/>
            <person name="Matthews B.B."/>
            <person name="Campbell K.S."/>
            <person name="Hradecky P."/>
            <person name="Huang Y."/>
            <person name="Kaminker J.S."/>
            <person name="Millburn G.H."/>
            <person name="Prochnik S.E."/>
            <person name="Smith C.D."/>
            <person name="Tupy J.L."/>
            <person name="Whitfield E.J."/>
            <person name="Bayraktaroglu L."/>
            <person name="Berman B.P."/>
            <person name="Bettencourt B.R."/>
            <person name="Celniker S.E."/>
            <person name="de Grey A.D.N.J."/>
            <person name="Drysdale R.A."/>
            <person name="Harris N.L."/>
            <person name="Richter J."/>
            <person name="Russo S."/>
            <person name="Schroeder A.J."/>
            <person name="Shu S.Q."/>
            <person name="Stapleton M."/>
            <person name="Yamada C."/>
            <person name="Ashburner M."/>
            <person name="Gelbart W.M."/>
            <person name="Rubin G.M."/>
            <person name="Lewis S.E."/>
        </authorList>
    </citation>
    <scope>GENOME REANNOTATION</scope>
    <source>
        <strain>Berkeley</strain>
    </source>
</reference>
<reference key="4">
    <citation type="journal article" date="2002" name="Genome Biol.">
        <title>A Drosophila full-length cDNA resource.</title>
        <authorList>
            <person name="Stapleton M."/>
            <person name="Carlson J.W."/>
            <person name="Brokstein P."/>
            <person name="Yu C."/>
            <person name="Champe M."/>
            <person name="George R.A."/>
            <person name="Guarin H."/>
            <person name="Kronmiller B."/>
            <person name="Pacleb J.M."/>
            <person name="Park S."/>
            <person name="Wan K.H."/>
            <person name="Rubin G.M."/>
            <person name="Celniker S.E."/>
        </authorList>
    </citation>
    <scope>NUCLEOTIDE SEQUENCE [LARGE SCALE MRNA]</scope>
    <source>
        <strain>Berkeley</strain>
        <tissue>Embryo</tissue>
    </source>
</reference>
<reference key="5">
    <citation type="journal article" date="2003" name="Development">
        <title>Scabrous and Gp150 are endosomal proteins that regulate Notch activity.</title>
        <authorList>
            <person name="Li Y."/>
            <person name="Fetchko M."/>
            <person name="Lai Z.C."/>
            <person name="Baker N.E."/>
        </authorList>
    </citation>
    <scope>FUNCTION</scope>
    <scope>SUBCELLULAR LOCATION</scope>
</reference>
<sequence length="799" mass="90119">MRDWQTFPDLQKKKVSRDHLNCPATMAGSNVLWPILLAVVLLQISVAFVSGAASGGVVLSDVNNMLRDAKVVTSEKPVVHSKQETEAPESSVELLRFVDDDEDSEDISSIERQDGRTMESKKMADQVRLLTKQLNALMLRRREDYEMLEHNLRKSLRLTTNANSVDADMRSELNQLREELAALRSSQSGNKERLTVEWLQQTISEIRKQLVDLQRTASNVAQDVQQRSSTFEDLATIRSDYQQLKLDLAAQRERQQQTEVYVQELREEMLQQEQDFQHALVKLQQRTRKDGSSASVEEESGSQEANQEQTGLETTADHKRRHCRFQSEQIHQLQLAQRNLRRQVNGLRFHHIDERVRSIEVEQHRIANANFNLSSQIASLDKLHTSMLELLEDVEGLQTKMDKSIPELRHEISKLEFANAQITSEQSLIREEGTNAARSLQAMAVSVSVLQEEREGMRKLSANVDQLRTNVDRLQSLVNDEMKNKLTHLNKPHKRPHHQNVQAQMPQDDSPIDSVLAETLVSELENVETQYEAIINKLPHDCSEVHTQTDGLHLIAPAGQRHPLMTHCTADGWTTVQRRFDGSADFNRSWADYAQGFGAPGGEFWIGNEQLHHLTLDNCSRLQVQMQDIYDNVWVAEYKRFYISSRADGYRLHIAEYSGNASDALNYQQGMQFSAIDDDRDISQTHCAANYEGGWWFSHCQHANLNGRYNLGLTWFDAARNEWIAVKSSRMLVKRLPAVECQANASASGAFVSVSGSAADAAPSSGATTTTTTATAAPATVTTPKTNNSVVQFVAAGQA</sequence>
<accession>P21520</accession>
<accession>Q0E998</accession>
<accession>Q8MQI8</accession>
<accession>Q9V6G9</accession>
<proteinExistence type="evidence at transcript level"/>
<organism>
    <name type="scientific">Drosophila melanogaster</name>
    <name type="common">Fruit fly</name>
    <dbReference type="NCBI Taxonomy" id="7227"/>
    <lineage>
        <taxon>Eukaryota</taxon>
        <taxon>Metazoa</taxon>
        <taxon>Ecdysozoa</taxon>
        <taxon>Arthropoda</taxon>
        <taxon>Hexapoda</taxon>
        <taxon>Insecta</taxon>
        <taxon>Pterygota</taxon>
        <taxon>Neoptera</taxon>
        <taxon>Endopterygota</taxon>
        <taxon>Diptera</taxon>
        <taxon>Brachycera</taxon>
        <taxon>Muscomorpha</taxon>
        <taxon>Ephydroidea</taxon>
        <taxon>Drosophilidae</taxon>
        <taxon>Drosophila</taxon>
        <taxon>Sophophora</taxon>
    </lineage>
</organism>
<feature type="signal peptide" evidence="1">
    <location>
        <begin position="1"/>
        <end position="51"/>
    </location>
</feature>
<feature type="chain" id="PRO_0000009108" description="Protein scabrous">
    <location>
        <begin position="52"/>
        <end position="799"/>
    </location>
</feature>
<feature type="domain" description="Fibrinogen C-terminal" evidence="2">
    <location>
        <begin position="533"/>
        <end position="737"/>
    </location>
</feature>
<feature type="region of interest" description="Disordered" evidence="3">
    <location>
        <begin position="287"/>
        <end position="316"/>
    </location>
</feature>
<feature type="region of interest" description="Disordered" evidence="3">
    <location>
        <begin position="489"/>
        <end position="509"/>
    </location>
</feature>
<feature type="compositionally biased region" description="Basic residues" evidence="3">
    <location>
        <begin position="489"/>
        <end position="498"/>
    </location>
</feature>
<feature type="glycosylation site" description="N-linked (GlcNAc...) asparagine" evidence="1">
    <location>
        <position position="372"/>
    </location>
</feature>
<feature type="glycosylation site" description="N-linked (GlcNAc...) asparagine" evidence="1">
    <location>
        <position position="587"/>
    </location>
</feature>
<feature type="glycosylation site" description="N-linked (GlcNAc...) asparagine" evidence="1">
    <location>
        <position position="618"/>
    </location>
</feature>
<feature type="glycosylation site" description="N-linked (GlcNAc...) asparagine" evidence="1">
    <location>
        <position position="660"/>
    </location>
</feature>
<feature type="glycosylation site" description="N-linked (GlcNAc...) asparagine" evidence="1">
    <location>
        <position position="744"/>
    </location>
</feature>
<feature type="glycosylation site" description="N-linked (GlcNAc...) asparagine" evidence="1">
    <location>
        <position position="787"/>
    </location>
</feature>
<feature type="disulfide bond" evidence="2">
    <location>
        <begin position="542"/>
        <end position="568"/>
    </location>
</feature>
<feature type="disulfide bond" evidence="2">
    <location>
        <begin position="687"/>
        <end position="700"/>
    </location>
</feature>
<feature type="sequence conflict" description="In Ref. 1; AAA28880." evidence="6" ref="1">
    <original>G</original>
    <variation>C</variation>
    <location>
        <position position="301"/>
    </location>
</feature>
<gene>
    <name type="primary">sca</name>
    <name type="ORF">CG17579</name>
</gene>
<evidence type="ECO:0000255" key="1"/>
<evidence type="ECO:0000255" key="2">
    <source>
        <dbReference type="PROSITE-ProRule" id="PRU00739"/>
    </source>
</evidence>
<evidence type="ECO:0000256" key="3">
    <source>
        <dbReference type="SAM" id="MobiDB-lite"/>
    </source>
</evidence>
<evidence type="ECO:0000269" key="4">
    <source>
    </source>
</evidence>
<evidence type="ECO:0000269" key="5">
    <source>
    </source>
</evidence>
<evidence type="ECO:0000305" key="6"/>
<name>SCA_DROME</name>
<comment type="function">
    <text evidence="4 5">Involved in regulation of neurogenesis. May encode a lateral inhibitor of R8 differentiation. In conjunction with Gp150, promotes Notch activation in response to Delta by regulating acquisition of insensitivity to Delta in a subset of cells.</text>
</comment>
<comment type="subcellular location">
    <subcellularLocation>
        <location evidence="4 5">Late endosome</location>
    </subcellularLocation>
    <text>Colocalizes in late endosomes with Gp150.</text>
</comment>
<comment type="PTM">
    <text>Possesses five pairs of dibasic residues that may be the target of proteolytic processing.</text>
</comment>
<comment type="sequence caution" evidence="6">
    <conflict type="erroneous initiation">
        <sequence resource="EMBL-CDS" id="AAA28880"/>
    </conflict>
</comment>